<evidence type="ECO:0000250" key="1">
    <source>
        <dbReference type="UniProtKB" id="P38827"/>
    </source>
</evidence>
<evidence type="ECO:0000250" key="2">
    <source>
        <dbReference type="UniProtKB" id="Q9Y7R4"/>
    </source>
</evidence>
<evidence type="ECO:0000255" key="3">
    <source>
        <dbReference type="PROSITE-ProRule" id="PRU00155"/>
    </source>
</evidence>
<evidence type="ECO:0000255" key="4">
    <source>
        <dbReference type="PROSITE-ProRule" id="PRU00190"/>
    </source>
</evidence>
<evidence type="ECO:0000256" key="5">
    <source>
        <dbReference type="SAM" id="MobiDB-lite"/>
    </source>
</evidence>
<evidence type="ECO:0000305" key="6"/>
<sequence>MSRTSAGFADFFPTAPSVLQQKRVRAPRDRPCPKDRPEDQLHVQDDNGQSSCSPGTSAANVSTNGSPPSVSVSETGTGVENSGCKLVGETNTDITGTDTSILSASLAQCRATQVNEARFDNLTPVTNAESSPPRKLSPHQSKSVEVAEYESNKFATDESKLAATPLHTPPTPRSQTSRSGVIKGCKLVYDPDLEKRSSKEKRRKPQYVDFVVNEQDGCSPDPRLSILNYTRGAGCKQKTKYRPAPYRLKQWPYDTATTIGPGPPVQIVVTGFDPLTPVAPINALFSSFGEISEINNRTDPITGRFLGVCSVKYKDSTSFRGAGPVPAATAARRAYVECKKEQRIGTRRIRVELDRDGAVSDRIVARAIESQRMGHKKNIVGEEAKVEPQAKKNEPPPTAPKGPSRSSTRPVAAVPEGPRASFLKPAIPSLIEETPILAQIKRDPYIFIAHCYVPVLSTTIPHLKKRLKLFDWKDIRCDKTGYYIIFENSRRGEEETERCFKVCHMKPLFTYIMNMESQPYGNPNYERSPSPERLQAERRERAERERLKKEADLDLEEEKKQRAIDLDPCREVLALIVRDLKDKLLEDVKSRIAAPTLYDYLDPDRHAARRRALGIPDPEGIRRHTFRLDADNFGSNNPRSFLPGDRSFSPYGLNILALPRIRKARRLNRANAAFLDERRKQPVRRKEVRPLYHRLQQLHDVDDSDEDQRTPFSRDIDEQDSRPPSRMSSRSSISDDGEESEPLDGLAPQGKRHESRLLGLEYEDSGNTLNEAVDGYSRHDSPGLSSTRKRKRVAEGIDVRKRPKEESERSQLNRSVEAGDTFYEESQHSEAAELGTVKPENLAGIGGKFLGRVEDRSINEDGEKENMERLHIESAIQGANLGIQQPLPDESTTTKSHEDPITEIEWGVSNDEPRPTVVDDETIILDLDGWQNLVKDEEDLCFLRHVLDGQSRSKVGNLSAWAWRQKEIKALNRAGESGPVHQETRIPDYYVCNPTGAARTEGRKRILESEKSKYLPHRIKVQKAREEREANAKSDPHASSAAEAARISAAKTISKSTSRSTRVNNRRLVADINAQKQALPMQGGDGDVLRFNQLKKRKKPVRFARSAIHNWGLYAEENISANDMIIEYVGEKVRQQVADMRERQYLKSGIGSSYLFRIDENTVIDATKRGGIARFINHSCTPNCTAKIIKVDGSKRIVIYALRDIGRDEELTYDYKFEREWDSDDRIPCLCGSTGCKGFLN</sequence>
<keyword id="KW-0156">Chromatin regulator</keyword>
<keyword id="KW-0158">Chromosome</keyword>
<keyword id="KW-0489">Methyltransferase</keyword>
<keyword id="KW-0539">Nucleus</keyword>
<keyword id="KW-1185">Reference proteome</keyword>
<keyword id="KW-0949">S-adenosyl-L-methionine</keyword>
<keyword id="KW-0808">Transferase</keyword>
<dbReference type="EC" id="2.1.1.354" evidence="2"/>
<dbReference type="EMBL" id="AAHF01000006">
    <property type="protein sequence ID" value="EAL88486.1"/>
    <property type="molecule type" value="Genomic_DNA"/>
</dbReference>
<dbReference type="RefSeq" id="XP_750524.1">
    <property type="nucleotide sequence ID" value="XM_745431.1"/>
</dbReference>
<dbReference type="SMR" id="Q4WNH8"/>
<dbReference type="STRING" id="330879.Q4WNH8"/>
<dbReference type="EnsemblFungi" id="EAL88486">
    <property type="protein sequence ID" value="EAL88486"/>
    <property type="gene ID" value="AFUA_6G06335"/>
</dbReference>
<dbReference type="GeneID" id="3508771"/>
<dbReference type="KEGG" id="afm:AFUA_6G06335"/>
<dbReference type="VEuPathDB" id="FungiDB:Afu6g06335"/>
<dbReference type="eggNOG" id="KOG1080">
    <property type="taxonomic scope" value="Eukaryota"/>
</dbReference>
<dbReference type="HOGENOM" id="CLU_004391_1_0_1"/>
<dbReference type="InParanoid" id="Q4WNH8"/>
<dbReference type="OMA" id="CHMTALF"/>
<dbReference type="OrthoDB" id="308383at2759"/>
<dbReference type="Proteomes" id="UP000002530">
    <property type="component" value="Chromosome 6"/>
</dbReference>
<dbReference type="GO" id="GO:0005694">
    <property type="term" value="C:chromosome"/>
    <property type="evidence" value="ECO:0007669"/>
    <property type="project" value="UniProtKB-SubCell"/>
</dbReference>
<dbReference type="GO" id="GO:0048188">
    <property type="term" value="C:Set1C/COMPASS complex"/>
    <property type="evidence" value="ECO:0000250"/>
    <property type="project" value="UniProtKB"/>
</dbReference>
<dbReference type="GO" id="GO:0042800">
    <property type="term" value="F:histone H3K4 methyltransferase activity"/>
    <property type="evidence" value="ECO:0000318"/>
    <property type="project" value="GO_Central"/>
</dbReference>
<dbReference type="GO" id="GO:0140999">
    <property type="term" value="F:histone H3K4 trimethyltransferase activity"/>
    <property type="evidence" value="ECO:0007669"/>
    <property type="project" value="UniProtKB-EC"/>
</dbReference>
<dbReference type="GO" id="GO:0003723">
    <property type="term" value="F:RNA binding"/>
    <property type="evidence" value="ECO:0000250"/>
    <property type="project" value="UniProtKB"/>
</dbReference>
<dbReference type="GO" id="GO:0032259">
    <property type="term" value="P:methylation"/>
    <property type="evidence" value="ECO:0007669"/>
    <property type="project" value="UniProtKB-KW"/>
</dbReference>
<dbReference type="CDD" id="cd20072">
    <property type="entry name" value="SET_SET1"/>
    <property type="match status" value="1"/>
</dbReference>
<dbReference type="Gene3D" id="3.30.70.330">
    <property type="match status" value="1"/>
</dbReference>
<dbReference type="Gene3D" id="2.170.270.10">
    <property type="entry name" value="SET domain"/>
    <property type="match status" value="1"/>
</dbReference>
<dbReference type="InterPro" id="IPR024657">
    <property type="entry name" value="COMPASS_Set1_N-SET"/>
</dbReference>
<dbReference type="InterPro" id="IPR012677">
    <property type="entry name" value="Nucleotide-bd_a/b_plait_sf"/>
</dbReference>
<dbReference type="InterPro" id="IPR003616">
    <property type="entry name" value="Post-SET_dom"/>
</dbReference>
<dbReference type="InterPro" id="IPR035979">
    <property type="entry name" value="RBD_domain_sf"/>
</dbReference>
<dbReference type="InterPro" id="IPR044570">
    <property type="entry name" value="Set1-like"/>
</dbReference>
<dbReference type="InterPro" id="IPR017111">
    <property type="entry name" value="Set1_fungi"/>
</dbReference>
<dbReference type="InterPro" id="IPR024636">
    <property type="entry name" value="SET_assoc"/>
</dbReference>
<dbReference type="InterPro" id="IPR001214">
    <property type="entry name" value="SET_dom"/>
</dbReference>
<dbReference type="InterPro" id="IPR046341">
    <property type="entry name" value="SET_dom_sf"/>
</dbReference>
<dbReference type="PANTHER" id="PTHR45814">
    <property type="entry name" value="HISTONE-LYSINE N-METHYLTRANSFERASE SETD1"/>
    <property type="match status" value="1"/>
</dbReference>
<dbReference type="PANTHER" id="PTHR45814:SF2">
    <property type="entry name" value="HISTONE-LYSINE N-METHYLTRANSFERASE SETD1"/>
    <property type="match status" value="1"/>
</dbReference>
<dbReference type="Pfam" id="PF11764">
    <property type="entry name" value="N-SET"/>
    <property type="match status" value="1"/>
</dbReference>
<dbReference type="Pfam" id="PF00856">
    <property type="entry name" value="SET"/>
    <property type="match status" value="1"/>
</dbReference>
<dbReference type="Pfam" id="PF11767">
    <property type="entry name" value="SET_assoc"/>
    <property type="match status" value="1"/>
</dbReference>
<dbReference type="PIRSF" id="PIRSF037104">
    <property type="entry name" value="Histone_H3-K4_mtfrase_Set1_fun"/>
    <property type="match status" value="1"/>
</dbReference>
<dbReference type="SMART" id="SM01291">
    <property type="entry name" value="N-SET"/>
    <property type="match status" value="1"/>
</dbReference>
<dbReference type="SMART" id="SM00508">
    <property type="entry name" value="PostSET"/>
    <property type="match status" value="1"/>
</dbReference>
<dbReference type="SMART" id="SM00317">
    <property type="entry name" value="SET"/>
    <property type="match status" value="1"/>
</dbReference>
<dbReference type="SUPFAM" id="SSF54928">
    <property type="entry name" value="RNA-binding domain, RBD"/>
    <property type="match status" value="1"/>
</dbReference>
<dbReference type="SUPFAM" id="SSF82199">
    <property type="entry name" value="SET domain"/>
    <property type="match status" value="1"/>
</dbReference>
<dbReference type="PROSITE" id="PS50868">
    <property type="entry name" value="POST_SET"/>
    <property type="match status" value="1"/>
</dbReference>
<dbReference type="PROSITE" id="PS51572">
    <property type="entry name" value="SAM_MT43_1"/>
    <property type="match status" value="1"/>
</dbReference>
<dbReference type="PROSITE" id="PS50280">
    <property type="entry name" value="SET"/>
    <property type="match status" value="1"/>
</dbReference>
<protein>
    <recommendedName>
        <fullName>Histone-lysine N-methyltransferase, H3 lysine-4 specific</fullName>
        <ecNumber evidence="2">2.1.1.354</ecNumber>
    </recommendedName>
    <alternativeName>
        <fullName>COMPASS component set1</fullName>
    </alternativeName>
    <alternativeName>
        <fullName>SET domain-containing protein 1</fullName>
    </alternativeName>
</protein>
<gene>
    <name type="primary">set1</name>
    <name type="ORF">AFUA_6G06335</name>
</gene>
<organism>
    <name type="scientific">Aspergillus fumigatus (strain ATCC MYA-4609 / CBS 101355 / FGSC A1100 / Af293)</name>
    <name type="common">Neosartorya fumigata</name>
    <dbReference type="NCBI Taxonomy" id="330879"/>
    <lineage>
        <taxon>Eukaryota</taxon>
        <taxon>Fungi</taxon>
        <taxon>Dikarya</taxon>
        <taxon>Ascomycota</taxon>
        <taxon>Pezizomycotina</taxon>
        <taxon>Eurotiomycetes</taxon>
        <taxon>Eurotiomycetidae</taxon>
        <taxon>Eurotiales</taxon>
        <taxon>Aspergillaceae</taxon>
        <taxon>Aspergillus</taxon>
        <taxon>Aspergillus subgen. Fumigati</taxon>
    </lineage>
</organism>
<feature type="chain" id="PRO_0000269765" description="Histone-lysine N-methyltransferase, H3 lysine-4 specific">
    <location>
        <begin position="1"/>
        <end position="1241"/>
    </location>
</feature>
<feature type="domain" description="SET" evidence="4">
    <location>
        <begin position="1099"/>
        <end position="1216"/>
    </location>
</feature>
<feature type="domain" description="Post-SET" evidence="3">
    <location>
        <begin position="1225"/>
        <end position="1241"/>
    </location>
</feature>
<feature type="region of interest" description="Disordered" evidence="5">
    <location>
        <begin position="1"/>
        <end position="84"/>
    </location>
</feature>
<feature type="region of interest" description="Disordered" evidence="5">
    <location>
        <begin position="120"/>
        <end position="179"/>
    </location>
</feature>
<feature type="region of interest" description="Disordered" evidence="5">
    <location>
        <begin position="376"/>
        <end position="415"/>
    </location>
</feature>
<feature type="region of interest" description="Disordered" evidence="5">
    <location>
        <begin position="520"/>
        <end position="545"/>
    </location>
</feature>
<feature type="region of interest" description="Disordered" evidence="5">
    <location>
        <begin position="686"/>
        <end position="752"/>
    </location>
</feature>
<feature type="region of interest" description="Disordered" evidence="5">
    <location>
        <begin position="768"/>
        <end position="819"/>
    </location>
</feature>
<feature type="region of interest" description="Disordered" evidence="5">
    <location>
        <begin position="1022"/>
        <end position="1064"/>
    </location>
</feature>
<feature type="short sequence motif" description="RxxxRR motif" evidence="1">
    <location>
        <begin position="1062"/>
        <end position="1067"/>
    </location>
</feature>
<feature type="compositionally biased region" description="Basic and acidic residues" evidence="5">
    <location>
        <begin position="26"/>
        <end position="45"/>
    </location>
</feature>
<feature type="compositionally biased region" description="Polar residues" evidence="5">
    <location>
        <begin position="46"/>
        <end position="80"/>
    </location>
</feature>
<feature type="compositionally biased region" description="Basic and acidic residues" evidence="5">
    <location>
        <begin position="379"/>
        <end position="394"/>
    </location>
</feature>
<feature type="compositionally biased region" description="Basic and acidic residues" evidence="5">
    <location>
        <begin position="534"/>
        <end position="545"/>
    </location>
</feature>
<feature type="compositionally biased region" description="Basic and acidic residues" evidence="5">
    <location>
        <begin position="697"/>
        <end position="723"/>
    </location>
</feature>
<feature type="compositionally biased region" description="Low complexity" evidence="5">
    <location>
        <begin position="724"/>
        <end position="734"/>
    </location>
</feature>
<feature type="compositionally biased region" description="Basic and acidic residues" evidence="5">
    <location>
        <begin position="793"/>
        <end position="811"/>
    </location>
</feature>
<feature type="compositionally biased region" description="Basic and acidic residues" evidence="5">
    <location>
        <begin position="1023"/>
        <end position="1036"/>
    </location>
</feature>
<feature type="compositionally biased region" description="Low complexity" evidence="5">
    <location>
        <begin position="1038"/>
        <end position="1064"/>
    </location>
</feature>
<feature type="binding site" evidence="4">
    <location>
        <position position="1215"/>
    </location>
    <ligand>
        <name>S-adenosyl-L-methionine</name>
        <dbReference type="ChEBI" id="CHEBI:59789"/>
    </ligand>
</feature>
<accession>Q4WNH8</accession>
<proteinExistence type="inferred from homology"/>
<name>SET1_ASPFU</name>
<reference key="1">
    <citation type="journal article" date="2005" name="Nature">
        <title>Genomic sequence of the pathogenic and allergenic filamentous fungus Aspergillus fumigatus.</title>
        <authorList>
            <person name="Nierman W.C."/>
            <person name="Pain A."/>
            <person name="Anderson M.J."/>
            <person name="Wortman J.R."/>
            <person name="Kim H.S."/>
            <person name="Arroyo J."/>
            <person name="Berriman M."/>
            <person name="Abe K."/>
            <person name="Archer D.B."/>
            <person name="Bermejo C."/>
            <person name="Bennett J.W."/>
            <person name="Bowyer P."/>
            <person name="Chen D."/>
            <person name="Collins M."/>
            <person name="Coulsen R."/>
            <person name="Davies R."/>
            <person name="Dyer P.S."/>
            <person name="Farman M.L."/>
            <person name="Fedorova N."/>
            <person name="Fedorova N.D."/>
            <person name="Feldblyum T.V."/>
            <person name="Fischer R."/>
            <person name="Fosker N."/>
            <person name="Fraser A."/>
            <person name="Garcia J.L."/>
            <person name="Garcia M.J."/>
            <person name="Goble A."/>
            <person name="Goldman G.H."/>
            <person name="Gomi K."/>
            <person name="Griffith-Jones S."/>
            <person name="Gwilliam R."/>
            <person name="Haas B.J."/>
            <person name="Haas H."/>
            <person name="Harris D.E."/>
            <person name="Horiuchi H."/>
            <person name="Huang J."/>
            <person name="Humphray S."/>
            <person name="Jimenez J."/>
            <person name="Keller N."/>
            <person name="Khouri H."/>
            <person name="Kitamoto K."/>
            <person name="Kobayashi T."/>
            <person name="Konzack S."/>
            <person name="Kulkarni R."/>
            <person name="Kumagai T."/>
            <person name="Lafton A."/>
            <person name="Latge J.-P."/>
            <person name="Li W."/>
            <person name="Lord A."/>
            <person name="Lu C."/>
            <person name="Majoros W.H."/>
            <person name="May G.S."/>
            <person name="Miller B.L."/>
            <person name="Mohamoud Y."/>
            <person name="Molina M."/>
            <person name="Monod M."/>
            <person name="Mouyna I."/>
            <person name="Mulligan S."/>
            <person name="Murphy L.D."/>
            <person name="O'Neil S."/>
            <person name="Paulsen I."/>
            <person name="Penalva M.A."/>
            <person name="Pertea M."/>
            <person name="Price C."/>
            <person name="Pritchard B.L."/>
            <person name="Quail M.A."/>
            <person name="Rabbinowitsch E."/>
            <person name="Rawlins N."/>
            <person name="Rajandream M.A."/>
            <person name="Reichard U."/>
            <person name="Renauld H."/>
            <person name="Robson G.D."/>
            <person name="Rodriguez de Cordoba S."/>
            <person name="Rodriguez-Pena J.M."/>
            <person name="Ronning C.M."/>
            <person name="Rutter S."/>
            <person name="Salzberg S.L."/>
            <person name="Sanchez M."/>
            <person name="Sanchez-Ferrero J.C."/>
            <person name="Saunders D."/>
            <person name="Seeger K."/>
            <person name="Squares R."/>
            <person name="Squares S."/>
            <person name="Takeuchi M."/>
            <person name="Tekaia F."/>
            <person name="Turner G."/>
            <person name="Vazquez de Aldana C.R."/>
            <person name="Weidman J."/>
            <person name="White O."/>
            <person name="Woodward J.R."/>
            <person name="Yu J.-H."/>
            <person name="Fraser C.M."/>
            <person name="Galagan J.E."/>
            <person name="Asai K."/>
            <person name="Machida M."/>
            <person name="Hall N."/>
            <person name="Barrell B.G."/>
            <person name="Denning D.W."/>
        </authorList>
    </citation>
    <scope>NUCLEOTIDE SEQUENCE [LARGE SCALE GENOMIC DNA]</scope>
    <source>
        <strain>ATCC MYA-4609 / CBS 101355 / FGSC A1100 / Af293</strain>
    </source>
</reference>
<comment type="function">
    <text evidence="1">Catalytic component of the COMPASS (Set1C) complex that specifically mono-, di- and trimethylates histone H3 to form H3K4me1/2/3. Binds RNAs which might negatively affect its histone methyltransferase activity. COMPASS recognizes ubiquitinated H2B on one face of the nucleosome which stimulates the methylation of H3 on the opposing face.</text>
</comment>
<comment type="catalytic activity">
    <reaction evidence="1">
        <text>L-lysyl(4)-[histone H3] + 3 S-adenosyl-L-methionine = N(6),N(6),N(6)-trimethyl-L-lysyl(4)-[histone H3] + 3 S-adenosyl-L-homocysteine + 3 H(+)</text>
        <dbReference type="Rhea" id="RHEA:60260"/>
        <dbReference type="Rhea" id="RHEA-COMP:15537"/>
        <dbReference type="Rhea" id="RHEA-COMP:15547"/>
        <dbReference type="ChEBI" id="CHEBI:15378"/>
        <dbReference type="ChEBI" id="CHEBI:29969"/>
        <dbReference type="ChEBI" id="CHEBI:57856"/>
        <dbReference type="ChEBI" id="CHEBI:59789"/>
        <dbReference type="ChEBI" id="CHEBI:61961"/>
        <dbReference type="EC" id="2.1.1.354"/>
    </reaction>
</comment>
<comment type="catalytic activity">
    <reaction evidence="1">
        <text>N(6)-methyl-L-lysyl(4)-[histone H3] + S-adenosyl-L-methionine = N(6),N(6)-dimethyl-L-lysyl(4)-[histone H3] + S-adenosyl-L-homocysteine + H(+)</text>
        <dbReference type="Rhea" id="RHEA:60268"/>
        <dbReference type="Rhea" id="RHEA-COMP:15540"/>
        <dbReference type="Rhea" id="RHEA-COMP:15543"/>
        <dbReference type="ChEBI" id="CHEBI:15378"/>
        <dbReference type="ChEBI" id="CHEBI:57856"/>
        <dbReference type="ChEBI" id="CHEBI:59789"/>
        <dbReference type="ChEBI" id="CHEBI:61929"/>
        <dbReference type="ChEBI" id="CHEBI:61976"/>
    </reaction>
</comment>
<comment type="catalytic activity">
    <reaction evidence="1">
        <text>N(6),N(6)-dimethyl-L-lysyl(4)-[histone H3] + S-adenosyl-L-methionine = N(6),N(6),N(6)-trimethyl-L-lysyl(4)-[histone H3] + S-adenosyl-L-homocysteine + H(+)</text>
        <dbReference type="Rhea" id="RHEA:60272"/>
        <dbReference type="Rhea" id="RHEA-COMP:15537"/>
        <dbReference type="Rhea" id="RHEA-COMP:15540"/>
        <dbReference type="ChEBI" id="CHEBI:15378"/>
        <dbReference type="ChEBI" id="CHEBI:57856"/>
        <dbReference type="ChEBI" id="CHEBI:59789"/>
        <dbReference type="ChEBI" id="CHEBI:61961"/>
        <dbReference type="ChEBI" id="CHEBI:61976"/>
    </reaction>
</comment>
<comment type="subunit">
    <text evidence="1">Component of the Set1C/COMPASS complex.</text>
</comment>
<comment type="subcellular location">
    <subcellularLocation>
        <location evidence="6">Nucleus</location>
    </subcellularLocation>
    <subcellularLocation>
        <location evidence="6">Chromosome</location>
    </subcellularLocation>
</comment>
<comment type="domain">
    <text evidence="1">The RxxxRR motif forms an adapter helix that bridges the nucleosome and ubiquitin.</text>
</comment>
<comment type="similarity">
    <text evidence="4">Belongs to the class V-like SAM-binding methyltransferase superfamily.</text>
</comment>